<feature type="peptide" id="PRO_0000424405" description="Nephilakinin-2">
    <location>
        <begin position="1"/>
        <end position="10"/>
    </location>
</feature>
<feature type="modified residue" description="Arginine amide" evidence="1">
    <location>
        <position position="10"/>
    </location>
</feature>
<evidence type="ECO:0000269" key="1">
    <source>
    </source>
</evidence>
<evidence type="ECO:0000305" key="2"/>
<evidence type="ECO:0000305" key="3">
    <source>
    </source>
</evidence>
<protein>
    <recommendedName>
        <fullName>Nephilakinin-2</fullName>
    </recommendedName>
    <alternativeName>
        <fullName>Nephilakinin-II</fullName>
    </alternativeName>
</protein>
<reference key="1">
    <citation type="journal article" date="2006" name="Peptides">
        <title>Multiple bradykinin-related peptides from the capture web of the spider Nephila clavipes (Araneae, Tetragnatidae).</title>
        <authorList>
            <person name="Volsi E.C."/>
            <person name="Mendes M.A."/>
            <person name="Marques M.R."/>
            <person name="dos Santos L.D."/>
            <person name="Santos K.S."/>
            <person name="de Souza B.M."/>
            <person name="Babieri E.F."/>
            <person name="Palma M.S."/>
        </authorList>
    </citation>
    <scope>PROTEIN SEQUENCE</scope>
    <scope>IDENTIFICATION BY MASS SPECTROMETRY</scope>
    <scope>SYNTHESIS</scope>
    <scope>FUNCTION</scope>
    <scope>BIOASSAY</scope>
    <scope>TOXIC DOSE</scope>
    <scope>AMIDATION AT ARG-10</scope>
</reference>
<dbReference type="GO" id="GO:0005576">
    <property type="term" value="C:extracellular region"/>
    <property type="evidence" value="ECO:0007669"/>
    <property type="project" value="UniProtKB-SubCell"/>
</dbReference>
<dbReference type="GO" id="GO:0090729">
    <property type="term" value="F:toxin activity"/>
    <property type="evidence" value="ECO:0007669"/>
    <property type="project" value="UniProtKB-KW"/>
</dbReference>
<name>BRK2_TRICX</name>
<keyword id="KW-0027">Amidation</keyword>
<keyword id="KW-0903">Direct protein sequencing</keyword>
<keyword id="KW-1213">G-protein coupled receptor impairing toxin</keyword>
<keyword id="KW-0964">Secreted</keyword>
<keyword id="KW-0800">Toxin</keyword>
<sequence length="10" mass="1104">EAPPGFSPFR</sequence>
<accession>P0DM73</accession>
<organism>
    <name type="scientific">Trichonephila clavipes</name>
    <name type="common">Golden silk orbweaver</name>
    <name type="synonym">Nephila clavipes</name>
    <dbReference type="NCBI Taxonomy" id="2585209"/>
    <lineage>
        <taxon>Eukaryota</taxon>
        <taxon>Metazoa</taxon>
        <taxon>Ecdysozoa</taxon>
        <taxon>Arthropoda</taxon>
        <taxon>Chelicerata</taxon>
        <taxon>Arachnida</taxon>
        <taxon>Araneae</taxon>
        <taxon>Araneomorphae</taxon>
        <taxon>Entelegynae</taxon>
        <taxon>Araneoidea</taxon>
        <taxon>Nephilidae</taxon>
        <taxon>Trichonephila</taxon>
    </lineage>
</organism>
<proteinExistence type="evidence at protein level"/>
<comment type="function">
    <text evidence="1">Causes constriction on isolated rat ileum preparations and relaxation on rat duodenum muscle preparations at amounts higher than bradykinin. Is a partial agonist bradykinin receptor B2 (BDKRB2). Has insecticidal properties. May be related to the predation of insects by the spider webs.</text>
</comment>
<comment type="subcellular location">
    <subcellularLocation>
        <location>Secreted</location>
    </subcellularLocation>
</comment>
<comment type="toxic dose">
    <text evidence="1">LD(50) is 72 pmoles/mg when injected into honeybees. Dose that causes muscle constriction (ED(50)) is 1 uM. Dose that causes muscle relaxation (ED(50)) is 3.2 uM.</text>
</comment>
<comment type="miscellaneous">
    <text evidence="3">Has been extracted from the spider web.</text>
</comment>
<comment type="miscellaneous">
    <text evidence="3">Negative results: does not target bradykinin receptor B1 (BDKRB1).</text>
</comment>
<comment type="similarity">
    <text evidence="2">Belongs to the bradykinin-related peptide family.</text>
</comment>